<comment type="function">
    <text evidence="1">Exhibits S-adenosyl-L-methionine-dependent methyltransferase activity.</text>
</comment>
<comment type="similarity">
    <text evidence="2">Belongs to the UPF0677 family.</text>
</comment>
<keyword id="KW-0489">Methyltransferase</keyword>
<keyword id="KW-0949">S-adenosyl-L-methionine</keyword>
<keyword id="KW-0808">Transferase</keyword>
<accession>A0PVP6</accession>
<gene>
    <name type="ordered locus">MUL_4430</name>
</gene>
<evidence type="ECO:0000250" key="1"/>
<evidence type="ECO:0000305" key="2"/>
<proteinExistence type="inferred from homology"/>
<reference key="1">
    <citation type="journal article" date="2007" name="Genome Res.">
        <title>Reductive evolution and niche adaptation inferred from the genome of Mycobacterium ulcerans, the causative agent of Buruli ulcer.</title>
        <authorList>
            <person name="Stinear T.P."/>
            <person name="Seemann T."/>
            <person name="Pidot S."/>
            <person name="Frigui W."/>
            <person name="Reysset G."/>
            <person name="Garnier T."/>
            <person name="Meurice G."/>
            <person name="Simon D."/>
            <person name="Bouchier C."/>
            <person name="Ma L."/>
            <person name="Tichit M."/>
            <person name="Porter J.L."/>
            <person name="Ryan J."/>
            <person name="Johnson P.D.R."/>
            <person name="Davies J.K."/>
            <person name="Jenkin G.A."/>
            <person name="Small P.L.C."/>
            <person name="Jones L.M."/>
            <person name="Tekaia F."/>
            <person name="Laval F."/>
            <person name="Daffe M."/>
            <person name="Parkhill J."/>
            <person name="Cole S.T."/>
        </authorList>
    </citation>
    <scope>NUCLEOTIDE SEQUENCE [LARGE SCALE GENOMIC DNA]</scope>
    <source>
        <strain>Agy99</strain>
    </source>
</reference>
<sequence>MARTEGDSWDLANSVGATATMVAAARAAATRRSRPIIADPFAEPLVRAVGLDLFTRAASGEVDLDEVAAGLGFVRMVDTFAARALFFDKFFADAIAAGLRQVVIVASGLDARPYRLPWPTGMRVYEIDQPEVIEFKTTTLARLGASPTADHHPVGIDLRDDWPSALRAAGFDAARPTAWLAEGVRIGFLPPEAETRLLDNVIELSAVGSRLAADYGTINGSSAESQQLAQQMTEGWRAHGLDMDIAGLTYPGEHTDVAAYLRSHGWKTATADHGDLVLAAGLAELTAADRQSPASTIGFVTAVRSTD</sequence>
<organism>
    <name type="scientific">Mycobacterium ulcerans (strain Agy99)</name>
    <dbReference type="NCBI Taxonomy" id="362242"/>
    <lineage>
        <taxon>Bacteria</taxon>
        <taxon>Bacillati</taxon>
        <taxon>Actinomycetota</taxon>
        <taxon>Actinomycetes</taxon>
        <taxon>Mycobacteriales</taxon>
        <taxon>Mycobacteriaceae</taxon>
        <taxon>Mycobacterium</taxon>
        <taxon>Mycobacterium ulcerans group</taxon>
    </lineage>
</organism>
<feature type="chain" id="PRO_0000361248" description="Putative S-adenosyl-L-methionine-dependent methyltransferase MUL_4430">
    <location>
        <begin position="1"/>
        <end position="307"/>
    </location>
</feature>
<feature type="binding site" evidence="1">
    <location>
        <position position="128"/>
    </location>
    <ligand>
        <name>S-adenosyl-L-methionine</name>
        <dbReference type="ChEBI" id="CHEBI:59789"/>
    </ligand>
</feature>
<feature type="binding site" evidence="1">
    <location>
        <begin position="157"/>
        <end position="158"/>
    </location>
    <ligand>
        <name>S-adenosyl-L-methionine</name>
        <dbReference type="ChEBI" id="CHEBI:59789"/>
    </ligand>
</feature>
<name>Y4430_MYCUA</name>
<dbReference type="EC" id="2.1.1.-"/>
<dbReference type="EMBL" id="CP000325">
    <property type="protein sequence ID" value="ABL06415.1"/>
    <property type="molecule type" value="Genomic_DNA"/>
</dbReference>
<dbReference type="RefSeq" id="WP_011742016.1">
    <property type="nucleotide sequence ID" value="NC_008611.1"/>
</dbReference>
<dbReference type="SMR" id="A0PVP6"/>
<dbReference type="KEGG" id="mul:MUL_4430"/>
<dbReference type="eggNOG" id="COG3315">
    <property type="taxonomic scope" value="Bacteria"/>
</dbReference>
<dbReference type="HOGENOM" id="CLU_056160_2_1_11"/>
<dbReference type="Proteomes" id="UP000000765">
    <property type="component" value="Chromosome"/>
</dbReference>
<dbReference type="GO" id="GO:0008168">
    <property type="term" value="F:methyltransferase activity"/>
    <property type="evidence" value="ECO:0007669"/>
    <property type="project" value="UniProtKB-KW"/>
</dbReference>
<dbReference type="GO" id="GO:0032259">
    <property type="term" value="P:methylation"/>
    <property type="evidence" value="ECO:0007669"/>
    <property type="project" value="UniProtKB-KW"/>
</dbReference>
<dbReference type="Gene3D" id="3.40.50.150">
    <property type="entry name" value="Vaccinia Virus protein VP39"/>
    <property type="match status" value="1"/>
</dbReference>
<dbReference type="InterPro" id="IPR007213">
    <property type="entry name" value="Ppm1/Ppm2/Tcmp"/>
</dbReference>
<dbReference type="InterPro" id="IPR029063">
    <property type="entry name" value="SAM-dependent_MTases_sf"/>
</dbReference>
<dbReference type="InterPro" id="IPR011610">
    <property type="entry name" value="SAM_mthyl_Trfase_ML2640-like"/>
</dbReference>
<dbReference type="NCBIfam" id="TIGR00027">
    <property type="entry name" value="mthyl_TIGR00027"/>
    <property type="match status" value="1"/>
</dbReference>
<dbReference type="PANTHER" id="PTHR43619">
    <property type="entry name" value="S-ADENOSYL-L-METHIONINE-DEPENDENT METHYLTRANSFERASE YKTD-RELATED"/>
    <property type="match status" value="1"/>
</dbReference>
<dbReference type="PANTHER" id="PTHR43619:SF2">
    <property type="entry name" value="S-ADENOSYL-L-METHIONINE-DEPENDENT METHYLTRANSFERASES SUPERFAMILY PROTEIN"/>
    <property type="match status" value="1"/>
</dbReference>
<dbReference type="Pfam" id="PF04072">
    <property type="entry name" value="LCM"/>
    <property type="match status" value="1"/>
</dbReference>
<dbReference type="SUPFAM" id="SSF53335">
    <property type="entry name" value="S-adenosyl-L-methionine-dependent methyltransferases"/>
    <property type="match status" value="1"/>
</dbReference>
<protein>
    <recommendedName>
        <fullName>Putative S-adenosyl-L-methionine-dependent methyltransferase MUL_4430</fullName>
        <ecNumber>2.1.1.-</ecNumber>
    </recommendedName>
</protein>